<comment type="function">
    <text evidence="1">Formation of pseudouridine at positions 38, 39 and 40 in the anticodon stem and loop of transfer RNAs.</text>
</comment>
<comment type="catalytic activity">
    <reaction evidence="1">
        <text>uridine(38/39/40) in tRNA = pseudouridine(38/39/40) in tRNA</text>
        <dbReference type="Rhea" id="RHEA:22376"/>
        <dbReference type="Rhea" id="RHEA-COMP:10085"/>
        <dbReference type="Rhea" id="RHEA-COMP:10087"/>
        <dbReference type="ChEBI" id="CHEBI:65314"/>
        <dbReference type="ChEBI" id="CHEBI:65315"/>
        <dbReference type="EC" id="5.4.99.12"/>
    </reaction>
</comment>
<comment type="subunit">
    <text evidence="1">Homodimer.</text>
</comment>
<comment type="similarity">
    <text evidence="1">Belongs to the tRNA pseudouridine synthase TruA family.</text>
</comment>
<proteinExistence type="inferred from homology"/>
<accession>Q9PPV4</accession>
<evidence type="ECO:0000255" key="1">
    <source>
        <dbReference type="HAMAP-Rule" id="MF_00171"/>
    </source>
</evidence>
<name>TRUA_UREPA</name>
<sequence>MNYKISLRYDGSLFYGWARQPQKRTVQGDLEEIFKSIFKINNIRIIGSGRTDKGVHAYEQTFSVKHSALKYDSHIIYQALCSRTSSDIQILEVQKVDDSFHAQYNATSKTYQYVINDYEFDLFRNNYELFVNQKINDQKILEALELFVGEHDFKSFSTSELTMTIRRINWVKIKRDTHLIIYINANGFLKNMVRMIVASCLDYAFNKISLAKIHELLIYPKKGASIKLAPACGLYLYKVYY</sequence>
<reference key="1">
    <citation type="journal article" date="2000" name="Nature">
        <title>The complete sequence of the mucosal pathogen Ureaplasma urealyticum.</title>
        <authorList>
            <person name="Glass J.I."/>
            <person name="Lefkowitz E.J."/>
            <person name="Glass J.S."/>
            <person name="Heiner C.R."/>
            <person name="Chen E.Y."/>
            <person name="Cassell G.H."/>
        </authorList>
    </citation>
    <scope>NUCLEOTIDE SEQUENCE [LARGE SCALE GENOMIC DNA]</scope>
    <source>
        <strain>ATCC 700970</strain>
    </source>
</reference>
<feature type="chain" id="PRO_0000057482" description="tRNA pseudouridine synthase A">
    <location>
        <begin position="1"/>
        <end position="241"/>
    </location>
</feature>
<feature type="active site" description="Nucleophile" evidence="1">
    <location>
        <position position="52"/>
    </location>
</feature>
<feature type="binding site" evidence="1">
    <location>
        <position position="111"/>
    </location>
    <ligand>
        <name>substrate</name>
    </ligand>
</feature>
<dbReference type="EC" id="5.4.99.12" evidence="1"/>
<dbReference type="EMBL" id="AF222894">
    <property type="protein sequence ID" value="AAF30949.1"/>
    <property type="molecule type" value="Genomic_DNA"/>
</dbReference>
<dbReference type="RefSeq" id="WP_006689087.1">
    <property type="nucleotide sequence ID" value="NC_002162.1"/>
</dbReference>
<dbReference type="SMR" id="Q9PPV4"/>
<dbReference type="STRING" id="273119.UU536"/>
<dbReference type="EnsemblBacteria" id="AAF30949">
    <property type="protein sequence ID" value="AAF30949"/>
    <property type="gene ID" value="UU536"/>
</dbReference>
<dbReference type="GeneID" id="29672419"/>
<dbReference type="KEGG" id="uur:UU536"/>
<dbReference type="eggNOG" id="COG0101">
    <property type="taxonomic scope" value="Bacteria"/>
</dbReference>
<dbReference type="HOGENOM" id="CLU_014673_0_1_14"/>
<dbReference type="OrthoDB" id="9811823at2"/>
<dbReference type="Proteomes" id="UP000000423">
    <property type="component" value="Chromosome"/>
</dbReference>
<dbReference type="GO" id="GO:0003723">
    <property type="term" value="F:RNA binding"/>
    <property type="evidence" value="ECO:0007669"/>
    <property type="project" value="InterPro"/>
</dbReference>
<dbReference type="GO" id="GO:0160147">
    <property type="term" value="F:tRNA pseudouridine(38-40) synthase activity"/>
    <property type="evidence" value="ECO:0007669"/>
    <property type="project" value="UniProtKB-EC"/>
</dbReference>
<dbReference type="GO" id="GO:0031119">
    <property type="term" value="P:tRNA pseudouridine synthesis"/>
    <property type="evidence" value="ECO:0007669"/>
    <property type="project" value="UniProtKB-UniRule"/>
</dbReference>
<dbReference type="CDD" id="cd02570">
    <property type="entry name" value="PseudoU_synth_EcTruA"/>
    <property type="match status" value="1"/>
</dbReference>
<dbReference type="Gene3D" id="3.30.70.660">
    <property type="entry name" value="Pseudouridine synthase I, catalytic domain, C-terminal subdomain"/>
    <property type="match status" value="1"/>
</dbReference>
<dbReference type="Gene3D" id="3.30.70.580">
    <property type="entry name" value="Pseudouridine synthase I, catalytic domain, N-terminal subdomain"/>
    <property type="match status" value="1"/>
</dbReference>
<dbReference type="HAMAP" id="MF_00171">
    <property type="entry name" value="TruA"/>
    <property type="match status" value="1"/>
</dbReference>
<dbReference type="InterPro" id="IPR020103">
    <property type="entry name" value="PsdUridine_synth_cat_dom_sf"/>
</dbReference>
<dbReference type="InterPro" id="IPR001406">
    <property type="entry name" value="PsdUridine_synth_TruA"/>
</dbReference>
<dbReference type="InterPro" id="IPR020097">
    <property type="entry name" value="PsdUridine_synth_TruA_a/b_dom"/>
</dbReference>
<dbReference type="InterPro" id="IPR020095">
    <property type="entry name" value="PsdUridine_synth_TruA_C"/>
</dbReference>
<dbReference type="InterPro" id="IPR020094">
    <property type="entry name" value="TruA/RsuA/RluB/E/F_N"/>
</dbReference>
<dbReference type="NCBIfam" id="TIGR00071">
    <property type="entry name" value="hisT_truA"/>
    <property type="match status" value="1"/>
</dbReference>
<dbReference type="PANTHER" id="PTHR11142">
    <property type="entry name" value="PSEUDOURIDYLATE SYNTHASE"/>
    <property type="match status" value="1"/>
</dbReference>
<dbReference type="PANTHER" id="PTHR11142:SF0">
    <property type="entry name" value="TRNA PSEUDOURIDINE SYNTHASE-LIKE 1"/>
    <property type="match status" value="1"/>
</dbReference>
<dbReference type="Pfam" id="PF01416">
    <property type="entry name" value="PseudoU_synth_1"/>
    <property type="match status" value="2"/>
</dbReference>
<dbReference type="PIRSF" id="PIRSF001430">
    <property type="entry name" value="tRNA_psdUrid_synth"/>
    <property type="match status" value="1"/>
</dbReference>
<dbReference type="SUPFAM" id="SSF55120">
    <property type="entry name" value="Pseudouridine synthase"/>
    <property type="match status" value="1"/>
</dbReference>
<keyword id="KW-0413">Isomerase</keyword>
<keyword id="KW-1185">Reference proteome</keyword>
<keyword id="KW-0819">tRNA processing</keyword>
<organism>
    <name type="scientific">Ureaplasma parvum serovar 3 (strain ATCC 700970)</name>
    <dbReference type="NCBI Taxonomy" id="273119"/>
    <lineage>
        <taxon>Bacteria</taxon>
        <taxon>Bacillati</taxon>
        <taxon>Mycoplasmatota</taxon>
        <taxon>Mycoplasmoidales</taxon>
        <taxon>Mycoplasmoidaceae</taxon>
        <taxon>Ureaplasma</taxon>
    </lineage>
</organism>
<protein>
    <recommendedName>
        <fullName evidence="1">tRNA pseudouridine synthase A</fullName>
        <ecNumber evidence="1">5.4.99.12</ecNumber>
    </recommendedName>
    <alternativeName>
        <fullName evidence="1">tRNA pseudouridine(38-40) synthase</fullName>
    </alternativeName>
    <alternativeName>
        <fullName evidence="1">tRNA pseudouridylate synthase I</fullName>
    </alternativeName>
    <alternativeName>
        <fullName evidence="1">tRNA-uridine isomerase I</fullName>
    </alternativeName>
</protein>
<gene>
    <name evidence="1" type="primary">truA</name>
    <name type="synonym">hisT</name>
    <name type="ordered locus">UU536</name>
</gene>